<dbReference type="EC" id="4.1.1.50" evidence="1"/>
<dbReference type="EMBL" id="CP000716">
    <property type="protein sequence ID" value="ABR30438.1"/>
    <property type="molecule type" value="Genomic_DNA"/>
</dbReference>
<dbReference type="RefSeq" id="WP_012056799.1">
    <property type="nucleotide sequence ID" value="NC_009616.1"/>
</dbReference>
<dbReference type="SMR" id="A6LKI7"/>
<dbReference type="STRING" id="391009.Tmel_0571"/>
<dbReference type="KEGG" id="tme:Tmel_0571"/>
<dbReference type="eggNOG" id="COG1586">
    <property type="taxonomic scope" value="Bacteria"/>
</dbReference>
<dbReference type="HOGENOM" id="CLU_125470_2_3_0"/>
<dbReference type="OrthoDB" id="9793120at2"/>
<dbReference type="UniPathway" id="UPA00331">
    <property type="reaction ID" value="UER00451"/>
</dbReference>
<dbReference type="Proteomes" id="UP000001110">
    <property type="component" value="Chromosome"/>
</dbReference>
<dbReference type="GO" id="GO:0005829">
    <property type="term" value="C:cytosol"/>
    <property type="evidence" value="ECO:0007669"/>
    <property type="project" value="TreeGrafter"/>
</dbReference>
<dbReference type="GO" id="GO:0004014">
    <property type="term" value="F:adenosylmethionine decarboxylase activity"/>
    <property type="evidence" value="ECO:0007669"/>
    <property type="project" value="UniProtKB-UniRule"/>
</dbReference>
<dbReference type="GO" id="GO:0008295">
    <property type="term" value="P:spermidine biosynthetic process"/>
    <property type="evidence" value="ECO:0007669"/>
    <property type="project" value="UniProtKB-UniRule"/>
</dbReference>
<dbReference type="FunFam" id="3.30.160.750:FF:000004">
    <property type="entry name" value="S-adenosylmethionine decarboxylase proenzyme"/>
    <property type="match status" value="1"/>
</dbReference>
<dbReference type="FunFam" id="3.30.360.110:FF:000001">
    <property type="entry name" value="S-adenosylmethionine decarboxylase proenzyme"/>
    <property type="match status" value="1"/>
</dbReference>
<dbReference type="Gene3D" id="3.30.160.750">
    <property type="match status" value="1"/>
</dbReference>
<dbReference type="Gene3D" id="3.30.360.110">
    <property type="entry name" value="S-adenosylmethionine decarboxylase domain"/>
    <property type="match status" value="1"/>
</dbReference>
<dbReference type="HAMAP" id="MF_00464">
    <property type="entry name" value="AdoMetDC_1"/>
    <property type="match status" value="1"/>
</dbReference>
<dbReference type="InterPro" id="IPR042286">
    <property type="entry name" value="AdoMetDC_C"/>
</dbReference>
<dbReference type="InterPro" id="IPR003826">
    <property type="entry name" value="AdoMetDC_fam_prok"/>
</dbReference>
<dbReference type="InterPro" id="IPR042284">
    <property type="entry name" value="AdoMetDC_N"/>
</dbReference>
<dbReference type="InterPro" id="IPR016067">
    <property type="entry name" value="S-AdoMet_deCO2ase_core"/>
</dbReference>
<dbReference type="InterPro" id="IPR017716">
    <property type="entry name" value="S-AdoMet_deCOase_pro-enz"/>
</dbReference>
<dbReference type="NCBIfam" id="TIGR03330">
    <property type="entry name" value="SAM_DCase_Bsu"/>
    <property type="match status" value="1"/>
</dbReference>
<dbReference type="PANTHER" id="PTHR33866">
    <property type="entry name" value="S-ADENOSYLMETHIONINE DECARBOXYLASE PROENZYME"/>
    <property type="match status" value="1"/>
</dbReference>
<dbReference type="PANTHER" id="PTHR33866:SF2">
    <property type="entry name" value="S-ADENOSYLMETHIONINE DECARBOXYLASE PROENZYME"/>
    <property type="match status" value="1"/>
</dbReference>
<dbReference type="Pfam" id="PF02675">
    <property type="entry name" value="AdoMet_dc"/>
    <property type="match status" value="1"/>
</dbReference>
<dbReference type="SUPFAM" id="SSF56276">
    <property type="entry name" value="S-adenosylmethionine decarboxylase"/>
    <property type="match status" value="1"/>
</dbReference>
<name>SPEH_THEM4</name>
<sequence length="130" mass="14788">MKSLGRHIIAEFYDCNKEILDNVEAIEKSMKEAAYETGATLVNSSFHRFLPYGVSGVVVISESHLTIHTWPEYGYAAVDLFTCGDDVDPWKAFSYLKKILKSQRVHVVEHLRGKYDEIGIPENSPHKMEV</sequence>
<evidence type="ECO:0000255" key="1">
    <source>
        <dbReference type="HAMAP-Rule" id="MF_00464"/>
    </source>
</evidence>
<organism>
    <name type="scientific">Thermosipho melanesiensis (strain DSM 12029 / CIP 104789 / BI429)</name>
    <dbReference type="NCBI Taxonomy" id="391009"/>
    <lineage>
        <taxon>Bacteria</taxon>
        <taxon>Thermotogati</taxon>
        <taxon>Thermotogota</taxon>
        <taxon>Thermotogae</taxon>
        <taxon>Thermotogales</taxon>
        <taxon>Fervidobacteriaceae</taxon>
        <taxon>Thermosipho</taxon>
    </lineage>
</organism>
<protein>
    <recommendedName>
        <fullName evidence="1">S-adenosylmethionine decarboxylase proenzyme</fullName>
        <shortName evidence="1">AdoMetDC</shortName>
        <shortName evidence="1">SAMDC</shortName>
        <ecNumber evidence="1">4.1.1.50</ecNumber>
    </recommendedName>
    <component>
        <recommendedName>
            <fullName evidence="1">S-adenosylmethionine decarboxylase beta chain</fullName>
        </recommendedName>
    </component>
    <component>
        <recommendedName>
            <fullName evidence="1">S-adenosylmethionine decarboxylase alpha chain</fullName>
        </recommendedName>
    </component>
</protein>
<accession>A6LKI7</accession>
<keyword id="KW-0068">Autocatalytic cleavage</keyword>
<keyword id="KW-0210">Decarboxylase</keyword>
<keyword id="KW-0456">Lyase</keyword>
<keyword id="KW-0620">Polyamine biosynthesis</keyword>
<keyword id="KW-0670">Pyruvate</keyword>
<keyword id="KW-0949">S-adenosyl-L-methionine</keyword>
<keyword id="KW-0704">Schiff base</keyword>
<keyword id="KW-0745">Spermidine biosynthesis</keyword>
<keyword id="KW-0865">Zymogen</keyword>
<proteinExistence type="inferred from homology"/>
<comment type="function">
    <text evidence="1">Catalyzes the decarboxylation of S-adenosylmethionine to S-adenosylmethioninamine (dcAdoMet), the propylamine donor required for the synthesis of the polyamines spermine and spermidine from the diamine putrescine.</text>
</comment>
<comment type="catalytic activity">
    <reaction evidence="1">
        <text>S-adenosyl-L-methionine + H(+) = S-adenosyl 3-(methylsulfanyl)propylamine + CO2</text>
        <dbReference type="Rhea" id="RHEA:15981"/>
        <dbReference type="ChEBI" id="CHEBI:15378"/>
        <dbReference type="ChEBI" id="CHEBI:16526"/>
        <dbReference type="ChEBI" id="CHEBI:57443"/>
        <dbReference type="ChEBI" id="CHEBI:59789"/>
        <dbReference type="EC" id="4.1.1.50"/>
    </reaction>
</comment>
<comment type="cofactor">
    <cofactor evidence="1">
        <name>pyruvate</name>
        <dbReference type="ChEBI" id="CHEBI:15361"/>
    </cofactor>
    <text evidence="1">Binds 1 pyruvoyl group covalently per subunit.</text>
</comment>
<comment type="pathway">
    <text evidence="1">Amine and polyamine biosynthesis; S-adenosylmethioninamine biosynthesis; S-adenosylmethioninamine from S-adenosyl-L-methionine: step 1/1.</text>
</comment>
<comment type="subunit">
    <text evidence="1">Heterotetramer of two alpha and two beta chains arranged as a dimer of alpha/beta heterodimers.</text>
</comment>
<comment type="PTM">
    <text evidence="1">Is synthesized initially as an inactive proenzyme. Formation of the active enzyme involves a self-maturation process in which the active site pyruvoyl group is generated from an internal serine residue via an autocatalytic post-translational modification. Two non-identical subunits are generated from the proenzyme in this reaction, and the pyruvate is formed at the N-terminus of the alpha chain, which is derived from the carboxyl end of the proenzyme. The post-translation cleavage follows an unusual pathway, termed non-hydrolytic serinolysis, in which the side chain hydroxyl group of the serine supplies its oxygen atom to form the C-terminus of the beta chain, while the remainder of the serine residue undergoes an oxidative deamination to produce ammonia and the pyruvoyl group blocking the N-terminus of the alpha chain.</text>
</comment>
<comment type="similarity">
    <text evidence="1">Belongs to the prokaryotic AdoMetDC family. Type 1 subfamily.</text>
</comment>
<reference key="1">
    <citation type="submission" date="2007-05" db="EMBL/GenBank/DDBJ databases">
        <title>Complete sequence of Thermosipho melanesiensis BI429.</title>
        <authorList>
            <consortium name="US DOE Joint Genome Institute"/>
            <person name="Copeland A."/>
            <person name="Lucas S."/>
            <person name="Lapidus A."/>
            <person name="Barry K."/>
            <person name="Glavina del Rio T."/>
            <person name="Dalin E."/>
            <person name="Tice H."/>
            <person name="Pitluck S."/>
            <person name="Chertkov O."/>
            <person name="Brettin T."/>
            <person name="Bruce D."/>
            <person name="Detter J.C."/>
            <person name="Han C."/>
            <person name="Schmutz J."/>
            <person name="Larimer F."/>
            <person name="Land M."/>
            <person name="Hauser L."/>
            <person name="Kyrpides N."/>
            <person name="Mikhailova N."/>
            <person name="Nelson K."/>
            <person name="Gogarten J.P."/>
            <person name="Noll K."/>
            <person name="Richardson P."/>
        </authorList>
    </citation>
    <scope>NUCLEOTIDE SEQUENCE [LARGE SCALE GENOMIC DNA]</scope>
    <source>
        <strain>DSM 12029 / CIP 104789 / BI429</strain>
    </source>
</reference>
<gene>
    <name evidence="1" type="primary">speH</name>
    <name type="ordered locus">Tmel_0571</name>
</gene>
<feature type="chain" id="PRO_1000013686" description="S-adenosylmethionine decarboxylase beta chain" evidence="1">
    <location>
        <begin position="1"/>
        <end position="62"/>
    </location>
</feature>
<feature type="chain" id="PRO_0000315035" description="S-adenosylmethionine decarboxylase alpha chain" evidence="1">
    <location>
        <begin position="63"/>
        <end position="130"/>
    </location>
</feature>
<feature type="active site" description="Schiff-base intermediate with substrate; via pyruvic acid" evidence="1">
    <location>
        <position position="63"/>
    </location>
</feature>
<feature type="active site" description="Proton acceptor; for processing activity" evidence="1">
    <location>
        <position position="68"/>
    </location>
</feature>
<feature type="active site" description="Proton donor; for catalytic activity" evidence="1">
    <location>
        <position position="83"/>
    </location>
</feature>
<feature type="site" description="Cleavage (non-hydrolytic); by autolysis" evidence="1">
    <location>
        <begin position="62"/>
        <end position="63"/>
    </location>
</feature>
<feature type="modified residue" description="Pyruvic acid (Ser); by autocatalysis" evidence="1">
    <location>
        <position position="63"/>
    </location>
</feature>